<feature type="chain" id="PRO_1000198615" description="tRNA-specific 2-thiouridylase MnmA">
    <location>
        <begin position="1"/>
        <end position="382"/>
    </location>
</feature>
<feature type="region of interest" description="Interaction with tRNA" evidence="1">
    <location>
        <begin position="159"/>
        <end position="161"/>
    </location>
</feature>
<feature type="active site" description="Nucleophile" evidence="1">
    <location>
        <position position="112"/>
    </location>
</feature>
<feature type="active site" description="Cysteine persulfide intermediate" evidence="1">
    <location>
        <position position="209"/>
    </location>
</feature>
<feature type="binding site" evidence="1">
    <location>
        <begin position="18"/>
        <end position="25"/>
    </location>
    <ligand>
        <name>ATP</name>
        <dbReference type="ChEBI" id="CHEBI:30616"/>
    </ligand>
</feature>
<feature type="binding site" evidence="1">
    <location>
        <position position="44"/>
    </location>
    <ligand>
        <name>ATP</name>
        <dbReference type="ChEBI" id="CHEBI:30616"/>
    </ligand>
</feature>
<feature type="binding site" evidence="1">
    <location>
        <position position="136"/>
    </location>
    <ligand>
        <name>ATP</name>
        <dbReference type="ChEBI" id="CHEBI:30616"/>
    </ligand>
</feature>
<feature type="site" description="Interaction with tRNA" evidence="1">
    <location>
        <position position="137"/>
    </location>
</feature>
<feature type="site" description="Interaction with tRNA" evidence="1">
    <location>
        <position position="351"/>
    </location>
</feature>
<feature type="disulfide bond" description="Alternate" evidence="1">
    <location>
        <begin position="112"/>
        <end position="209"/>
    </location>
</feature>
<keyword id="KW-0067">ATP-binding</keyword>
<keyword id="KW-0963">Cytoplasm</keyword>
<keyword id="KW-1015">Disulfide bond</keyword>
<keyword id="KW-0547">Nucleotide-binding</keyword>
<keyword id="KW-1185">Reference proteome</keyword>
<keyword id="KW-0694">RNA-binding</keyword>
<keyword id="KW-0808">Transferase</keyword>
<keyword id="KW-0819">tRNA processing</keyword>
<keyword id="KW-0820">tRNA-binding</keyword>
<reference key="1">
    <citation type="submission" date="2009-01" db="EMBL/GenBank/DDBJ databases">
        <title>Complete sequence of chromosome of Methylobacterium nodulans ORS 2060.</title>
        <authorList>
            <consortium name="US DOE Joint Genome Institute"/>
            <person name="Lucas S."/>
            <person name="Copeland A."/>
            <person name="Lapidus A."/>
            <person name="Glavina del Rio T."/>
            <person name="Dalin E."/>
            <person name="Tice H."/>
            <person name="Bruce D."/>
            <person name="Goodwin L."/>
            <person name="Pitluck S."/>
            <person name="Sims D."/>
            <person name="Brettin T."/>
            <person name="Detter J.C."/>
            <person name="Han C."/>
            <person name="Larimer F."/>
            <person name="Land M."/>
            <person name="Hauser L."/>
            <person name="Kyrpides N."/>
            <person name="Ivanova N."/>
            <person name="Marx C.J."/>
            <person name="Richardson P."/>
        </authorList>
    </citation>
    <scope>NUCLEOTIDE SEQUENCE [LARGE SCALE GENOMIC DNA]</scope>
    <source>
        <strain>LMG 21967 / CNCM I-2342 / ORS 2060</strain>
    </source>
</reference>
<proteinExistence type="inferred from homology"/>
<gene>
    <name evidence="1" type="primary">mnmA</name>
    <name type="ordered locus">Mnod_6065</name>
</gene>
<evidence type="ECO:0000255" key="1">
    <source>
        <dbReference type="HAMAP-Rule" id="MF_00144"/>
    </source>
</evidence>
<comment type="function">
    <text evidence="1">Catalyzes the 2-thiolation of uridine at the wobble position (U34) of tRNA, leading to the formation of s(2)U34.</text>
</comment>
<comment type="catalytic activity">
    <reaction evidence="1">
        <text>S-sulfanyl-L-cysteinyl-[protein] + uridine(34) in tRNA + AH2 + ATP = 2-thiouridine(34) in tRNA + L-cysteinyl-[protein] + A + AMP + diphosphate + H(+)</text>
        <dbReference type="Rhea" id="RHEA:47032"/>
        <dbReference type="Rhea" id="RHEA-COMP:10131"/>
        <dbReference type="Rhea" id="RHEA-COMP:11726"/>
        <dbReference type="Rhea" id="RHEA-COMP:11727"/>
        <dbReference type="Rhea" id="RHEA-COMP:11728"/>
        <dbReference type="ChEBI" id="CHEBI:13193"/>
        <dbReference type="ChEBI" id="CHEBI:15378"/>
        <dbReference type="ChEBI" id="CHEBI:17499"/>
        <dbReference type="ChEBI" id="CHEBI:29950"/>
        <dbReference type="ChEBI" id="CHEBI:30616"/>
        <dbReference type="ChEBI" id="CHEBI:33019"/>
        <dbReference type="ChEBI" id="CHEBI:61963"/>
        <dbReference type="ChEBI" id="CHEBI:65315"/>
        <dbReference type="ChEBI" id="CHEBI:87170"/>
        <dbReference type="ChEBI" id="CHEBI:456215"/>
        <dbReference type="EC" id="2.8.1.13"/>
    </reaction>
</comment>
<comment type="subcellular location">
    <subcellularLocation>
        <location evidence="1">Cytoplasm</location>
    </subcellularLocation>
</comment>
<comment type="similarity">
    <text evidence="1">Belongs to the MnmA/TRMU family.</text>
</comment>
<dbReference type="EC" id="2.8.1.13" evidence="1"/>
<dbReference type="EMBL" id="CP001349">
    <property type="protein sequence ID" value="ACL60890.1"/>
    <property type="molecule type" value="Genomic_DNA"/>
</dbReference>
<dbReference type="RefSeq" id="WP_015932483.1">
    <property type="nucleotide sequence ID" value="NC_011894.1"/>
</dbReference>
<dbReference type="SMR" id="B8IU32"/>
<dbReference type="STRING" id="460265.Mnod_6065"/>
<dbReference type="KEGG" id="mno:Mnod_6065"/>
<dbReference type="eggNOG" id="COG0482">
    <property type="taxonomic scope" value="Bacteria"/>
</dbReference>
<dbReference type="HOGENOM" id="CLU_035188_0_1_5"/>
<dbReference type="OrthoDB" id="9800696at2"/>
<dbReference type="Proteomes" id="UP000008207">
    <property type="component" value="Chromosome"/>
</dbReference>
<dbReference type="GO" id="GO:0005737">
    <property type="term" value="C:cytoplasm"/>
    <property type="evidence" value="ECO:0007669"/>
    <property type="project" value="UniProtKB-SubCell"/>
</dbReference>
<dbReference type="GO" id="GO:0005524">
    <property type="term" value="F:ATP binding"/>
    <property type="evidence" value="ECO:0007669"/>
    <property type="project" value="UniProtKB-KW"/>
</dbReference>
<dbReference type="GO" id="GO:0000049">
    <property type="term" value="F:tRNA binding"/>
    <property type="evidence" value="ECO:0007669"/>
    <property type="project" value="UniProtKB-KW"/>
</dbReference>
<dbReference type="GO" id="GO:0103016">
    <property type="term" value="F:tRNA-uridine 2-sulfurtransferase activity"/>
    <property type="evidence" value="ECO:0007669"/>
    <property type="project" value="UniProtKB-EC"/>
</dbReference>
<dbReference type="GO" id="GO:0002143">
    <property type="term" value="P:tRNA wobble position uridine thiolation"/>
    <property type="evidence" value="ECO:0007669"/>
    <property type="project" value="TreeGrafter"/>
</dbReference>
<dbReference type="CDD" id="cd01998">
    <property type="entry name" value="MnmA_TRMU-like"/>
    <property type="match status" value="1"/>
</dbReference>
<dbReference type="FunFam" id="2.30.30.280:FF:000001">
    <property type="entry name" value="tRNA-specific 2-thiouridylase MnmA"/>
    <property type="match status" value="1"/>
</dbReference>
<dbReference type="FunFam" id="3.40.50.620:FF:000115">
    <property type="entry name" value="tRNA-specific 2-thiouridylase MnmA"/>
    <property type="match status" value="1"/>
</dbReference>
<dbReference type="Gene3D" id="2.30.30.280">
    <property type="entry name" value="Adenine nucleotide alpha hydrolases-like domains"/>
    <property type="match status" value="1"/>
</dbReference>
<dbReference type="Gene3D" id="3.40.50.620">
    <property type="entry name" value="HUPs"/>
    <property type="match status" value="1"/>
</dbReference>
<dbReference type="Gene3D" id="2.40.30.10">
    <property type="entry name" value="Translation factors"/>
    <property type="match status" value="1"/>
</dbReference>
<dbReference type="HAMAP" id="MF_00144">
    <property type="entry name" value="tRNA_thiouridyl_MnmA"/>
    <property type="match status" value="1"/>
</dbReference>
<dbReference type="InterPro" id="IPR004506">
    <property type="entry name" value="MnmA-like"/>
</dbReference>
<dbReference type="InterPro" id="IPR046885">
    <property type="entry name" value="MnmA-like_C"/>
</dbReference>
<dbReference type="InterPro" id="IPR046884">
    <property type="entry name" value="MnmA-like_central"/>
</dbReference>
<dbReference type="InterPro" id="IPR023382">
    <property type="entry name" value="MnmA-like_central_sf"/>
</dbReference>
<dbReference type="InterPro" id="IPR014729">
    <property type="entry name" value="Rossmann-like_a/b/a_fold"/>
</dbReference>
<dbReference type="NCBIfam" id="NF001138">
    <property type="entry name" value="PRK00143.1"/>
    <property type="match status" value="1"/>
</dbReference>
<dbReference type="NCBIfam" id="TIGR00420">
    <property type="entry name" value="trmU"/>
    <property type="match status" value="1"/>
</dbReference>
<dbReference type="PANTHER" id="PTHR11933:SF5">
    <property type="entry name" value="MITOCHONDRIAL TRNA-SPECIFIC 2-THIOURIDYLASE 1"/>
    <property type="match status" value="1"/>
</dbReference>
<dbReference type="PANTHER" id="PTHR11933">
    <property type="entry name" value="TRNA 5-METHYLAMINOMETHYL-2-THIOURIDYLATE -METHYLTRANSFERASE"/>
    <property type="match status" value="1"/>
</dbReference>
<dbReference type="Pfam" id="PF03054">
    <property type="entry name" value="tRNA_Me_trans"/>
    <property type="match status" value="1"/>
</dbReference>
<dbReference type="Pfam" id="PF20258">
    <property type="entry name" value="tRNA_Me_trans_C"/>
    <property type="match status" value="1"/>
</dbReference>
<dbReference type="Pfam" id="PF20259">
    <property type="entry name" value="tRNA_Me_trans_M"/>
    <property type="match status" value="1"/>
</dbReference>
<dbReference type="SUPFAM" id="SSF52402">
    <property type="entry name" value="Adenine nucleotide alpha hydrolases-like"/>
    <property type="match status" value="1"/>
</dbReference>
<accession>B8IU32</accession>
<sequence>MNSLDLPKAPQDTRVVVAMSGGVDSSVVAGLLKRQGYDVVGITLQLYDHGAATHRRGACCAGQDIHDARRAAETLGIPHYVLDYEDRFREAVIDRFADSYIHGETPIPCVECNRSIKFRDLLATALDLGADALATGHYVASRPRPGGSRALYRALDPARDQSYFLYATTAEQLDVLRFPLGELPKDETRRLAREFGLSVADKPDSQDICFVPQGRYQDVIARLRPDSVRPGEIVHLDGRTLGRHDGIIGFTVGQRRGLKLATGEPLYVVRLDPETARVVVGPREALATSVIRLAETNWLGDEPLTELDGMPVAVRVRSTREPRPATLRWNRAASCAEVMLATPEDGVSPGQACAIYADEGPRARVLGGGTILRVEASRREAA</sequence>
<protein>
    <recommendedName>
        <fullName evidence="1">tRNA-specific 2-thiouridylase MnmA</fullName>
        <ecNumber evidence="1">2.8.1.13</ecNumber>
    </recommendedName>
</protein>
<name>MNMA_METNO</name>
<organism>
    <name type="scientific">Methylobacterium nodulans (strain LMG 21967 / CNCM I-2342 / ORS 2060)</name>
    <dbReference type="NCBI Taxonomy" id="460265"/>
    <lineage>
        <taxon>Bacteria</taxon>
        <taxon>Pseudomonadati</taxon>
        <taxon>Pseudomonadota</taxon>
        <taxon>Alphaproteobacteria</taxon>
        <taxon>Hyphomicrobiales</taxon>
        <taxon>Methylobacteriaceae</taxon>
        <taxon>Methylobacterium</taxon>
    </lineage>
</organism>